<gene>
    <name evidence="1" type="primary">rsmG</name>
    <name type="ordered locus">syc1246_c</name>
</gene>
<dbReference type="EC" id="2.1.1.-" evidence="1"/>
<dbReference type="EMBL" id="AP008231">
    <property type="protein sequence ID" value="BAD79436.1"/>
    <property type="molecule type" value="Genomic_DNA"/>
</dbReference>
<dbReference type="RefSeq" id="WP_011243558.1">
    <property type="nucleotide sequence ID" value="NZ_CP085785.1"/>
</dbReference>
<dbReference type="SMR" id="Q5N2N4"/>
<dbReference type="GeneID" id="72429082"/>
<dbReference type="KEGG" id="syc:syc1246_c"/>
<dbReference type="eggNOG" id="COG0357">
    <property type="taxonomic scope" value="Bacteria"/>
</dbReference>
<dbReference type="Proteomes" id="UP000001175">
    <property type="component" value="Chromosome"/>
</dbReference>
<dbReference type="GO" id="GO:0005829">
    <property type="term" value="C:cytosol"/>
    <property type="evidence" value="ECO:0007669"/>
    <property type="project" value="TreeGrafter"/>
</dbReference>
<dbReference type="GO" id="GO:0070043">
    <property type="term" value="F:rRNA (guanine-N7-)-methyltransferase activity"/>
    <property type="evidence" value="ECO:0007669"/>
    <property type="project" value="UniProtKB-UniRule"/>
</dbReference>
<dbReference type="CDD" id="cd02440">
    <property type="entry name" value="AdoMet_MTases"/>
    <property type="match status" value="1"/>
</dbReference>
<dbReference type="FunFam" id="3.40.50.150:FF:000041">
    <property type="entry name" value="Ribosomal RNA small subunit methyltransferase G"/>
    <property type="match status" value="1"/>
</dbReference>
<dbReference type="Gene3D" id="3.40.50.150">
    <property type="entry name" value="Vaccinia Virus protein VP39"/>
    <property type="match status" value="1"/>
</dbReference>
<dbReference type="HAMAP" id="MF_00074">
    <property type="entry name" value="16SrRNA_methyltr_G"/>
    <property type="match status" value="1"/>
</dbReference>
<dbReference type="InterPro" id="IPR003682">
    <property type="entry name" value="rRNA_ssu_MeTfrase_G"/>
</dbReference>
<dbReference type="InterPro" id="IPR029063">
    <property type="entry name" value="SAM-dependent_MTases_sf"/>
</dbReference>
<dbReference type="NCBIfam" id="TIGR00138">
    <property type="entry name" value="rsmG_gidB"/>
    <property type="match status" value="1"/>
</dbReference>
<dbReference type="PANTHER" id="PTHR31760">
    <property type="entry name" value="S-ADENOSYL-L-METHIONINE-DEPENDENT METHYLTRANSFERASES SUPERFAMILY PROTEIN"/>
    <property type="match status" value="1"/>
</dbReference>
<dbReference type="PANTHER" id="PTHR31760:SF0">
    <property type="entry name" value="S-ADENOSYL-L-METHIONINE-DEPENDENT METHYLTRANSFERASES SUPERFAMILY PROTEIN"/>
    <property type="match status" value="1"/>
</dbReference>
<dbReference type="Pfam" id="PF02527">
    <property type="entry name" value="GidB"/>
    <property type="match status" value="1"/>
</dbReference>
<dbReference type="PIRSF" id="PIRSF003078">
    <property type="entry name" value="GidB"/>
    <property type="match status" value="1"/>
</dbReference>
<dbReference type="SUPFAM" id="SSF53335">
    <property type="entry name" value="S-adenosyl-L-methionine-dependent methyltransferases"/>
    <property type="match status" value="1"/>
</dbReference>
<proteinExistence type="inferred from homology"/>
<feature type="chain" id="PRO_0000184352" description="Ribosomal RNA small subunit methyltransferase G">
    <location>
        <begin position="1"/>
        <end position="242"/>
    </location>
</feature>
<feature type="binding site" evidence="1">
    <location>
        <position position="81"/>
    </location>
    <ligand>
        <name>S-adenosyl-L-methionine</name>
        <dbReference type="ChEBI" id="CHEBI:59789"/>
    </ligand>
</feature>
<feature type="binding site" evidence="1">
    <location>
        <position position="86"/>
    </location>
    <ligand>
        <name>S-adenosyl-L-methionine</name>
        <dbReference type="ChEBI" id="CHEBI:59789"/>
    </ligand>
</feature>
<feature type="binding site" evidence="1">
    <location>
        <begin position="104"/>
        <end position="106"/>
    </location>
    <ligand>
        <name>S-adenosyl-L-methionine</name>
        <dbReference type="ChEBI" id="CHEBI:59789"/>
    </ligand>
</feature>
<feature type="binding site" evidence="1">
    <location>
        <begin position="132"/>
        <end position="133"/>
    </location>
    <ligand>
        <name>S-adenosyl-L-methionine</name>
        <dbReference type="ChEBI" id="CHEBI:59789"/>
    </ligand>
</feature>
<feature type="binding site" evidence="1">
    <location>
        <position position="151"/>
    </location>
    <ligand>
        <name>S-adenosyl-L-methionine</name>
        <dbReference type="ChEBI" id="CHEBI:59789"/>
    </ligand>
</feature>
<name>RSMG_SYNP6</name>
<accession>Q5N2N4</accession>
<reference key="1">
    <citation type="journal article" date="2007" name="Photosyn. Res.">
        <title>Complete nucleotide sequence of the freshwater unicellular cyanobacterium Synechococcus elongatus PCC 6301 chromosome: gene content and organization.</title>
        <authorList>
            <person name="Sugita C."/>
            <person name="Ogata K."/>
            <person name="Shikata M."/>
            <person name="Jikuya H."/>
            <person name="Takano J."/>
            <person name="Furumichi M."/>
            <person name="Kanehisa M."/>
            <person name="Omata T."/>
            <person name="Sugiura M."/>
            <person name="Sugita M."/>
        </authorList>
    </citation>
    <scope>NUCLEOTIDE SEQUENCE [LARGE SCALE GENOMIC DNA]</scope>
    <source>
        <strain>ATCC 27144 / PCC 6301 / SAUG 1402/1</strain>
    </source>
</reference>
<organism>
    <name type="scientific">Synechococcus sp. (strain ATCC 27144 / PCC 6301 / SAUG 1402/1)</name>
    <name type="common">Anacystis nidulans</name>
    <dbReference type="NCBI Taxonomy" id="269084"/>
    <lineage>
        <taxon>Bacteria</taxon>
        <taxon>Bacillati</taxon>
        <taxon>Cyanobacteriota</taxon>
        <taxon>Cyanophyceae</taxon>
        <taxon>Synechococcales</taxon>
        <taxon>Synechococcaceae</taxon>
        <taxon>Synechococcus</taxon>
    </lineage>
</organism>
<sequence>MTSGFALDVRNWTETLGWQPSPQQQQQFEALYHGIIAGNQRLNLTRITDPAEFTEKHLWDSLYGLRPLLTDDWSGEIIDIGTGGGFPGLPAAIALTKSRVMLLDSTRKKIQFLQTLAQELGLSNVTVAVGRAEEWGRDRRQRARYDWATIRAVGPATVCAEYCLPLLKIGGKAVLYRGQWTEEEAIALDRAVTILGGEVVDVSATFLPESGAERHCITLQKTAQTPAAYPRMVGLPSQKPLG</sequence>
<keyword id="KW-0963">Cytoplasm</keyword>
<keyword id="KW-0489">Methyltransferase</keyword>
<keyword id="KW-0698">rRNA processing</keyword>
<keyword id="KW-0949">S-adenosyl-L-methionine</keyword>
<keyword id="KW-0808">Transferase</keyword>
<comment type="function">
    <text evidence="1">Specifically methylates the N7 position of a guanine in 16S rRNA.</text>
</comment>
<comment type="subcellular location">
    <subcellularLocation>
        <location evidence="1">Cytoplasm</location>
    </subcellularLocation>
</comment>
<comment type="similarity">
    <text evidence="1">Belongs to the methyltransferase superfamily. RNA methyltransferase RsmG family.</text>
</comment>
<evidence type="ECO:0000255" key="1">
    <source>
        <dbReference type="HAMAP-Rule" id="MF_00074"/>
    </source>
</evidence>
<protein>
    <recommendedName>
        <fullName evidence="1">Ribosomal RNA small subunit methyltransferase G</fullName>
        <ecNumber evidence="1">2.1.1.-</ecNumber>
    </recommendedName>
    <alternativeName>
        <fullName evidence="1">16S rRNA 7-methylguanosine methyltransferase</fullName>
        <shortName evidence="1">16S rRNA m7G methyltransferase</shortName>
    </alternativeName>
</protein>